<feature type="chain" id="PRO_0000229729" description="Uncharacterized protein C9orf152">
    <location>
        <begin position="1"/>
        <end position="239"/>
    </location>
</feature>
<comment type="interaction">
    <interactant intactId="EBI-18560658">
        <id>Q5JTZ5</id>
    </interactant>
    <interactant intactId="EBI-11954519">
        <id>Q49AR9</id>
        <label>ANKS1A</label>
    </interactant>
    <organismsDiffer>false</organismsDiffer>
    <experiments>3</experiments>
</comment>
<comment type="interaction">
    <interactant intactId="EBI-18560658">
        <id>Q5JTZ5</id>
    </interactant>
    <interactant intactId="EBI-744248">
        <id>P40692</id>
        <label>MLH1</label>
    </interactant>
    <organismsDiffer>false</organismsDiffer>
    <experiments>3</experiments>
</comment>
<comment type="sequence caution" evidence="1">
    <conflict type="erroneous initiation">
        <sequence resource="EMBL-CDS" id="AAI10808"/>
    </conflict>
</comment>
<gene>
    <name type="primary">C9orf152</name>
</gene>
<organism>
    <name type="scientific">Homo sapiens</name>
    <name type="common">Human</name>
    <dbReference type="NCBI Taxonomy" id="9606"/>
    <lineage>
        <taxon>Eukaryota</taxon>
        <taxon>Metazoa</taxon>
        <taxon>Chordata</taxon>
        <taxon>Craniata</taxon>
        <taxon>Vertebrata</taxon>
        <taxon>Euteleostomi</taxon>
        <taxon>Mammalia</taxon>
        <taxon>Eutheria</taxon>
        <taxon>Euarchontoglires</taxon>
        <taxon>Primates</taxon>
        <taxon>Haplorrhini</taxon>
        <taxon>Catarrhini</taxon>
        <taxon>Hominidae</taxon>
        <taxon>Homo</taxon>
    </lineage>
</organism>
<dbReference type="EMBL" id="AL353598">
    <property type="status" value="NOT_ANNOTATED_CDS"/>
    <property type="molecule type" value="Genomic_DNA"/>
</dbReference>
<dbReference type="EMBL" id="BC110807">
    <property type="protein sequence ID" value="AAI10808.1"/>
    <property type="status" value="ALT_INIT"/>
    <property type="molecule type" value="mRNA"/>
</dbReference>
<dbReference type="CCDS" id="CCDS35102.2"/>
<dbReference type="RefSeq" id="NP_001013011.2">
    <property type="nucleotide sequence ID" value="NM_001012993.3"/>
</dbReference>
<dbReference type="BioGRID" id="135141">
    <property type="interactions" value="9"/>
</dbReference>
<dbReference type="FunCoup" id="Q5JTZ5">
    <property type="interactions" value="9"/>
</dbReference>
<dbReference type="IntAct" id="Q5JTZ5">
    <property type="interactions" value="5"/>
</dbReference>
<dbReference type="STRING" id="9606.ENSP00000383456"/>
<dbReference type="iPTMnet" id="Q5JTZ5"/>
<dbReference type="PhosphoSitePlus" id="Q5JTZ5"/>
<dbReference type="BioMuta" id="C9orf152"/>
<dbReference type="DMDM" id="205371744"/>
<dbReference type="jPOST" id="Q5JTZ5"/>
<dbReference type="MassIVE" id="Q5JTZ5"/>
<dbReference type="PaxDb" id="9606-ENSP00000383456"/>
<dbReference type="PeptideAtlas" id="Q5JTZ5"/>
<dbReference type="ProteomicsDB" id="63244"/>
<dbReference type="Antibodypedia" id="29459">
    <property type="antibodies" value="57 antibodies from 10 providers"/>
</dbReference>
<dbReference type="DNASU" id="401546"/>
<dbReference type="Ensembl" id="ENST00000400613.5">
    <property type="protein sequence ID" value="ENSP00000383456.4"/>
    <property type="gene ID" value="ENSG00000188959.10"/>
</dbReference>
<dbReference type="GeneID" id="401546"/>
<dbReference type="KEGG" id="hsa:401546"/>
<dbReference type="MANE-Select" id="ENST00000400613.5">
    <property type="protein sequence ID" value="ENSP00000383456.4"/>
    <property type="RefSeq nucleotide sequence ID" value="NM_001012993.3"/>
    <property type="RefSeq protein sequence ID" value="NP_001013011.2"/>
</dbReference>
<dbReference type="UCSC" id="uc011lwk.3">
    <property type="organism name" value="human"/>
</dbReference>
<dbReference type="AGR" id="HGNC:31455"/>
<dbReference type="CTD" id="401546"/>
<dbReference type="DisGeNET" id="401546"/>
<dbReference type="GeneCards" id="C9orf152"/>
<dbReference type="HGNC" id="HGNC:31455">
    <property type="gene designation" value="C9orf152"/>
</dbReference>
<dbReference type="HPA" id="ENSG00000188959">
    <property type="expression patterns" value="Tissue enhanced (intestine, salivary gland, stomach)"/>
</dbReference>
<dbReference type="neXtProt" id="NX_Q5JTZ5"/>
<dbReference type="OpenTargets" id="ENSG00000188959"/>
<dbReference type="PharmGKB" id="PA134988229"/>
<dbReference type="VEuPathDB" id="HostDB:ENSG00000188959"/>
<dbReference type="eggNOG" id="ENOG502SBBU">
    <property type="taxonomic scope" value="Eukaryota"/>
</dbReference>
<dbReference type="GeneTree" id="ENSGT00390000005322"/>
<dbReference type="HOGENOM" id="CLU_111626_0_0_1"/>
<dbReference type="InParanoid" id="Q5JTZ5"/>
<dbReference type="OMA" id="MVNAVWI"/>
<dbReference type="OrthoDB" id="9935880at2759"/>
<dbReference type="PAN-GO" id="Q5JTZ5">
    <property type="GO annotations" value="0 GO annotations based on evolutionary models"/>
</dbReference>
<dbReference type="PhylomeDB" id="Q5JTZ5"/>
<dbReference type="TreeFam" id="TF337454"/>
<dbReference type="PathwayCommons" id="Q5JTZ5"/>
<dbReference type="SignaLink" id="Q5JTZ5"/>
<dbReference type="BioGRID-ORCS" id="401546">
    <property type="hits" value="12 hits in 1128 CRISPR screens"/>
</dbReference>
<dbReference type="ChiTaRS" id="C9orf152">
    <property type="organism name" value="human"/>
</dbReference>
<dbReference type="GenomeRNAi" id="401546"/>
<dbReference type="Pharos" id="Q5JTZ5">
    <property type="development level" value="Tdark"/>
</dbReference>
<dbReference type="PRO" id="PR:Q5JTZ5"/>
<dbReference type="Proteomes" id="UP000005640">
    <property type="component" value="Chromosome 9"/>
</dbReference>
<dbReference type="RNAct" id="Q5JTZ5">
    <property type="molecule type" value="protein"/>
</dbReference>
<dbReference type="Bgee" id="ENSG00000188959">
    <property type="expression patterns" value="Expressed in ileal mucosa and 115 other cell types or tissues"/>
</dbReference>
<dbReference type="InterPro" id="IPR032738">
    <property type="entry name" value="Tbc1d30_C"/>
</dbReference>
<dbReference type="PANTHER" id="PTHR36290">
    <property type="entry name" value="RIKEN CDNA D630039A03 GENE"/>
    <property type="match status" value="1"/>
</dbReference>
<dbReference type="PANTHER" id="PTHR36290:SF1">
    <property type="entry name" value="RIKEN CDNA D630039A03 GENE"/>
    <property type="match status" value="1"/>
</dbReference>
<dbReference type="Pfam" id="PF15733">
    <property type="entry name" value="DUF4682"/>
    <property type="match status" value="1"/>
</dbReference>
<proteinExistence type="evidence at protein level"/>
<sequence>MEGLPCPCPALPHFWQLRSHLMAEGSRTQAPGKGPPLSIQFLRAQYEGLKRQQRTQAHLLVLPKGGNTPAPAESMVNAVWINKERRSSLSLEEADSEVEGRLEEAAQGCLQAPKSPWHTHLEMHCLVQTSPQDTSHQVHHRGKLVGSDQRLPPEGDTHLFETNQMTQQGTGIPEAAQLPCQVGNTQTKAVESGLKFSTQCPLSIKNPHRSGKPAYYPFPQRKTPRISQAARNLGLYGSA</sequence>
<accession>Q5JTZ5</accession>
<accession>A8MWT6</accession>
<reference key="1">
    <citation type="journal article" date="2004" name="Nature">
        <title>DNA sequence and analysis of human chromosome 9.</title>
        <authorList>
            <person name="Humphray S.J."/>
            <person name="Oliver K."/>
            <person name="Hunt A.R."/>
            <person name="Plumb R.W."/>
            <person name="Loveland J.E."/>
            <person name="Howe K.L."/>
            <person name="Andrews T.D."/>
            <person name="Searle S."/>
            <person name="Hunt S.E."/>
            <person name="Scott C.E."/>
            <person name="Jones M.C."/>
            <person name="Ainscough R."/>
            <person name="Almeida J.P."/>
            <person name="Ambrose K.D."/>
            <person name="Ashwell R.I.S."/>
            <person name="Babbage A.K."/>
            <person name="Babbage S."/>
            <person name="Bagguley C.L."/>
            <person name="Bailey J."/>
            <person name="Banerjee R."/>
            <person name="Barker D.J."/>
            <person name="Barlow K.F."/>
            <person name="Bates K."/>
            <person name="Beasley H."/>
            <person name="Beasley O."/>
            <person name="Bird C.P."/>
            <person name="Bray-Allen S."/>
            <person name="Brown A.J."/>
            <person name="Brown J.Y."/>
            <person name="Burford D."/>
            <person name="Burrill W."/>
            <person name="Burton J."/>
            <person name="Carder C."/>
            <person name="Carter N.P."/>
            <person name="Chapman J.C."/>
            <person name="Chen Y."/>
            <person name="Clarke G."/>
            <person name="Clark S.Y."/>
            <person name="Clee C.M."/>
            <person name="Clegg S."/>
            <person name="Collier R.E."/>
            <person name="Corby N."/>
            <person name="Crosier M."/>
            <person name="Cummings A.T."/>
            <person name="Davies J."/>
            <person name="Dhami P."/>
            <person name="Dunn M."/>
            <person name="Dutta I."/>
            <person name="Dyer L.W."/>
            <person name="Earthrowl M.E."/>
            <person name="Faulkner L."/>
            <person name="Fleming C.J."/>
            <person name="Frankish A."/>
            <person name="Frankland J.A."/>
            <person name="French L."/>
            <person name="Fricker D.G."/>
            <person name="Garner P."/>
            <person name="Garnett J."/>
            <person name="Ghori J."/>
            <person name="Gilbert J.G.R."/>
            <person name="Glison C."/>
            <person name="Grafham D.V."/>
            <person name="Gribble S."/>
            <person name="Griffiths C."/>
            <person name="Griffiths-Jones S."/>
            <person name="Grocock R."/>
            <person name="Guy J."/>
            <person name="Hall R.E."/>
            <person name="Hammond S."/>
            <person name="Harley J.L."/>
            <person name="Harrison E.S.I."/>
            <person name="Hart E.A."/>
            <person name="Heath P.D."/>
            <person name="Henderson C.D."/>
            <person name="Hopkins B.L."/>
            <person name="Howard P.J."/>
            <person name="Howden P.J."/>
            <person name="Huckle E."/>
            <person name="Johnson C."/>
            <person name="Johnson D."/>
            <person name="Joy A.A."/>
            <person name="Kay M."/>
            <person name="Keenan S."/>
            <person name="Kershaw J.K."/>
            <person name="Kimberley A.M."/>
            <person name="King A."/>
            <person name="Knights A."/>
            <person name="Laird G.K."/>
            <person name="Langford C."/>
            <person name="Lawlor S."/>
            <person name="Leongamornlert D.A."/>
            <person name="Leversha M."/>
            <person name="Lloyd C."/>
            <person name="Lloyd D.M."/>
            <person name="Lovell J."/>
            <person name="Martin S."/>
            <person name="Mashreghi-Mohammadi M."/>
            <person name="Matthews L."/>
            <person name="McLaren S."/>
            <person name="McLay K.E."/>
            <person name="McMurray A."/>
            <person name="Milne S."/>
            <person name="Nickerson T."/>
            <person name="Nisbett J."/>
            <person name="Nordsiek G."/>
            <person name="Pearce A.V."/>
            <person name="Peck A.I."/>
            <person name="Porter K.M."/>
            <person name="Pandian R."/>
            <person name="Pelan S."/>
            <person name="Phillimore B."/>
            <person name="Povey S."/>
            <person name="Ramsey Y."/>
            <person name="Rand V."/>
            <person name="Scharfe M."/>
            <person name="Sehra H.K."/>
            <person name="Shownkeen R."/>
            <person name="Sims S.K."/>
            <person name="Skuce C.D."/>
            <person name="Smith M."/>
            <person name="Steward C.A."/>
            <person name="Swarbreck D."/>
            <person name="Sycamore N."/>
            <person name="Tester J."/>
            <person name="Thorpe A."/>
            <person name="Tracey A."/>
            <person name="Tromans A."/>
            <person name="Thomas D.W."/>
            <person name="Wall M."/>
            <person name="Wallis J.M."/>
            <person name="West A.P."/>
            <person name="Whitehead S.L."/>
            <person name="Willey D.L."/>
            <person name="Williams S.A."/>
            <person name="Wilming L."/>
            <person name="Wray P.W."/>
            <person name="Young L."/>
            <person name="Ashurst J.L."/>
            <person name="Coulson A."/>
            <person name="Blocker H."/>
            <person name="Durbin R.M."/>
            <person name="Sulston J.E."/>
            <person name="Hubbard T."/>
            <person name="Jackson M.J."/>
            <person name="Bentley D.R."/>
            <person name="Beck S."/>
            <person name="Rogers J."/>
            <person name="Dunham I."/>
        </authorList>
    </citation>
    <scope>NUCLEOTIDE SEQUENCE [LARGE SCALE GENOMIC DNA]</scope>
</reference>
<reference key="2">
    <citation type="journal article" date="2004" name="Genome Res.">
        <title>The status, quality, and expansion of the NIH full-length cDNA project: the Mammalian Gene Collection (MGC).</title>
        <authorList>
            <consortium name="The MGC Project Team"/>
        </authorList>
    </citation>
    <scope>NUCLEOTIDE SEQUENCE [LARGE SCALE MRNA] OF 19-239</scope>
    <source>
        <tissue>Brain</tissue>
    </source>
</reference>
<evidence type="ECO:0000305" key="1"/>
<name>CI152_HUMAN</name>
<protein>
    <recommendedName>
        <fullName>Uncharacterized protein C9orf152</fullName>
    </recommendedName>
</protein>
<keyword id="KW-1267">Proteomics identification</keyword>
<keyword id="KW-1185">Reference proteome</keyword>